<accession>Q9R4A1</accession>
<keyword id="KW-0028">Amino-acid biosynthesis</keyword>
<keyword id="KW-0903">Direct protein sequencing</keyword>
<keyword id="KW-0378">Hydrolase</keyword>
<keyword id="KW-0486">Methionine biosynthesis</keyword>
<sequence length="35" mass="3924">MKIGIIGAMEEEVTLLRDKIENRQTITIGGSEIYT</sequence>
<gene>
    <name type="primary">mtnN</name>
</gene>
<proteinExistence type="evidence at protein level"/>
<dbReference type="EC" id="3.2.2.9" evidence="3"/>
<dbReference type="SMR" id="Q9R4A1"/>
<dbReference type="BioCyc" id="MetaCyc:MONOMER-1288"/>
<dbReference type="UniPathway" id="UPA00904">
    <property type="reaction ID" value="UER00871"/>
</dbReference>
<dbReference type="GO" id="GO:0008782">
    <property type="term" value="F:adenosylhomocysteine nucleosidase activity"/>
    <property type="evidence" value="ECO:0007669"/>
    <property type="project" value="UniProtKB-EC"/>
</dbReference>
<dbReference type="GO" id="GO:0008930">
    <property type="term" value="F:methylthioadenosine nucleosidase activity"/>
    <property type="evidence" value="ECO:0007669"/>
    <property type="project" value="RHEA"/>
</dbReference>
<dbReference type="GO" id="GO:0019509">
    <property type="term" value="P:L-methionine salvage from methylthioadenosine"/>
    <property type="evidence" value="ECO:0007669"/>
    <property type="project" value="UniProtKB-UniPathway"/>
</dbReference>
<name>MTNN_KLEPN</name>
<protein>
    <recommendedName>
        <fullName>5'-methylthioadenosine/S-adenosylhomocysteine nucleosidase</fullName>
        <shortName>MTA/SAH nucleosidase</shortName>
        <shortName>MTAN</shortName>
        <ecNumber evidence="3">3.2.2.9</ecNumber>
    </recommendedName>
    <alternativeName>
        <fullName evidence="2">5'-deoxyadenosine nucleosidase</fullName>
        <shortName evidence="2">DOA nucleosidase</shortName>
        <shortName evidence="2">dAdo nucleosidase</shortName>
    </alternativeName>
    <alternativeName>
        <fullName>5'-methylthioadenosine nucleosidase</fullName>
        <shortName>MTA nucleosidase</shortName>
    </alternativeName>
    <alternativeName>
        <fullName>S-adenosylhomocysteine nucleosidase</fullName>
        <shortName>AdoHcy nucleosidase</shortName>
        <shortName>SAH nucleosidase</shortName>
        <shortName>SRH nucleosidase</shortName>
    </alternativeName>
</protein>
<organism>
    <name type="scientific">Klebsiella pneumoniae</name>
    <dbReference type="NCBI Taxonomy" id="573"/>
    <lineage>
        <taxon>Bacteria</taxon>
        <taxon>Pseudomonadati</taxon>
        <taxon>Pseudomonadota</taxon>
        <taxon>Gammaproteobacteria</taxon>
        <taxon>Enterobacterales</taxon>
        <taxon>Enterobacteriaceae</taxon>
        <taxon>Klebsiella/Raoultella group</taxon>
        <taxon>Klebsiella</taxon>
        <taxon>Klebsiella pneumoniae complex</taxon>
    </lineage>
</organism>
<reference key="1">
    <citation type="journal article" date="1996" name="Biochem. J.">
        <title>Affinity purification of 5-methylthioribose kinase and 5-methylthioadenosine/S-adenosylhomocysteine nucleosidase from Klebsiella pneumoniae.</title>
        <authorList>
            <person name="Cornell K.A."/>
            <person name="Winter R.W."/>
            <person name="Tower P.A."/>
            <person name="Riscoe M.K."/>
        </authorList>
    </citation>
    <scope>PROTEIN SEQUENCE</scope>
    <scope>FUNCTION AS MTA NUCLEOSIDASE</scope>
    <scope>CATALYTIC ACTIVITY</scope>
    <scope>KINETIC PARAMETERS</scope>
</reference>
<evidence type="ECO:0000250" key="1"/>
<evidence type="ECO:0000250" key="2">
    <source>
        <dbReference type="UniProtKB" id="P0AF12"/>
    </source>
</evidence>
<evidence type="ECO:0000269" key="3">
    <source>
    </source>
</evidence>
<evidence type="ECO:0000305" key="4"/>
<feature type="chain" id="PRO_0000359310" description="5'-methylthioadenosine/S-adenosylhomocysteine nucleosidase">
    <location>
        <begin position="1"/>
        <end position="35" status="greater than"/>
    </location>
</feature>
<feature type="active site" description="Proton acceptor" evidence="1">
    <location>
        <position position="12"/>
    </location>
</feature>
<feature type="non-terminal residue">
    <location>
        <position position="35"/>
    </location>
</feature>
<comment type="function">
    <text evidence="2 3">Catalyzes the irreversible cleavage of the glycosidic bond in both 5'-methylthioadenosine (MTA) and S-adenosylhomocysteine (SAH/AdoHcy) to adenine and the corresponding thioribose, 5'-methylthioribose and S-ribosylhomocysteine, respectively (PubMed:8694776). Also cleaves 5'-deoxyadenosine, a toxic by-product of radical S-adenosylmethionine (SAM) enzymes, into 5-deoxyribose and adenine. Thus, is required for in vivo function of the radical SAM enzymes biotin synthase and lipoic acid synthase, that are inhibited by 5'-deoxyadenosine accumulation (By similarity).</text>
</comment>
<comment type="catalytic activity">
    <reaction evidence="3">
        <text>S-adenosyl-L-homocysteine + H2O = S-(5-deoxy-D-ribos-5-yl)-L-homocysteine + adenine</text>
        <dbReference type="Rhea" id="RHEA:17805"/>
        <dbReference type="ChEBI" id="CHEBI:15377"/>
        <dbReference type="ChEBI" id="CHEBI:16708"/>
        <dbReference type="ChEBI" id="CHEBI:57856"/>
        <dbReference type="ChEBI" id="CHEBI:58195"/>
        <dbReference type="EC" id="3.2.2.9"/>
    </reaction>
</comment>
<comment type="catalytic activity">
    <reaction evidence="3">
        <text>S-methyl-5'-thioadenosine + H2O = 5-(methylsulfanyl)-D-ribose + adenine</text>
        <dbReference type="Rhea" id="RHEA:13617"/>
        <dbReference type="ChEBI" id="CHEBI:15377"/>
        <dbReference type="ChEBI" id="CHEBI:16708"/>
        <dbReference type="ChEBI" id="CHEBI:17509"/>
        <dbReference type="ChEBI" id="CHEBI:78440"/>
        <dbReference type="EC" id="3.2.2.9"/>
    </reaction>
</comment>
<comment type="catalytic activity">
    <reaction evidence="2">
        <text>5'-deoxyadenosine + H2O = 5-deoxy-D-ribose + adenine</text>
        <dbReference type="Rhea" id="RHEA:29859"/>
        <dbReference type="ChEBI" id="CHEBI:15377"/>
        <dbReference type="ChEBI" id="CHEBI:16708"/>
        <dbReference type="ChEBI" id="CHEBI:17319"/>
        <dbReference type="ChEBI" id="CHEBI:149540"/>
        <dbReference type="EC" id="3.2.2.9"/>
    </reaction>
    <physiologicalReaction direction="left-to-right" evidence="2">
        <dbReference type="Rhea" id="RHEA:29860"/>
    </physiologicalReaction>
</comment>
<comment type="biophysicochemical properties">
    <kinetics>
        <KM evidence="3">8.7 uM for 5'-methylthioadenosine (at pH 7 and 37 degrees Celsius)</KM>
    </kinetics>
</comment>
<comment type="pathway">
    <text evidence="2">Amino-acid biosynthesis; L-methionine biosynthesis via salvage pathway; S-methyl-5-thio-alpha-D-ribose 1-phosphate from S-methyl-5'-thioadenosine (hydrolase route): step 1/2.</text>
</comment>
<comment type="subunit">
    <text evidence="2">Homodimer.</text>
</comment>
<comment type="similarity">
    <text evidence="4">Belongs to the PNP/UDP phosphorylase family. MtnN subfamily.</text>
</comment>